<reference key="1">
    <citation type="journal article" date="2006" name="J. Bacteriol.">
        <title>Comparative genomic evidence for a close relationship between the dimorphic prosthecate bacteria Hyphomonas neptunium and Caulobacter crescentus.</title>
        <authorList>
            <person name="Badger J.H."/>
            <person name="Hoover T.R."/>
            <person name="Brun Y.V."/>
            <person name="Weiner R.M."/>
            <person name="Laub M.T."/>
            <person name="Alexandre G."/>
            <person name="Mrazek J."/>
            <person name="Ren Q."/>
            <person name="Paulsen I.T."/>
            <person name="Nelson K.E."/>
            <person name="Khouri H.M."/>
            <person name="Radune D."/>
            <person name="Sosa J."/>
            <person name="Dodson R.J."/>
            <person name="Sullivan S.A."/>
            <person name="Rosovitz M.J."/>
            <person name="Madupu R."/>
            <person name="Brinkac L.M."/>
            <person name="Durkin A.S."/>
            <person name="Daugherty S.C."/>
            <person name="Kothari S.P."/>
            <person name="Giglio M.G."/>
            <person name="Zhou L."/>
            <person name="Haft D.H."/>
            <person name="Selengut J.D."/>
            <person name="Davidsen T.M."/>
            <person name="Yang Q."/>
            <person name="Zafar N."/>
            <person name="Ward N.L."/>
        </authorList>
    </citation>
    <scope>NUCLEOTIDE SEQUENCE [LARGE SCALE GENOMIC DNA]</scope>
    <source>
        <strain>ATCC 15444</strain>
    </source>
</reference>
<organism>
    <name type="scientific">Hyphomonas neptunium (strain ATCC 15444)</name>
    <dbReference type="NCBI Taxonomy" id="228405"/>
    <lineage>
        <taxon>Bacteria</taxon>
        <taxon>Pseudomonadati</taxon>
        <taxon>Pseudomonadota</taxon>
        <taxon>Alphaproteobacteria</taxon>
        <taxon>Hyphomonadales</taxon>
        <taxon>Hyphomonadaceae</taxon>
        <taxon>Hyphomonas</taxon>
    </lineage>
</organism>
<feature type="chain" id="PRO_0000377192" description="tRNA dimethylallyltransferase">
    <location>
        <begin position="1"/>
        <end position="316"/>
    </location>
</feature>
<feature type="region of interest" description="Interaction with substrate tRNA" evidence="1">
    <location>
        <begin position="34"/>
        <end position="37"/>
    </location>
</feature>
<feature type="region of interest" description="Interaction with substrate tRNA" evidence="1">
    <location>
        <begin position="158"/>
        <end position="162"/>
    </location>
</feature>
<feature type="binding site" evidence="1">
    <location>
        <begin position="9"/>
        <end position="16"/>
    </location>
    <ligand>
        <name>ATP</name>
        <dbReference type="ChEBI" id="CHEBI:30616"/>
    </ligand>
</feature>
<feature type="binding site" evidence="1">
    <location>
        <begin position="11"/>
        <end position="16"/>
    </location>
    <ligand>
        <name>substrate</name>
    </ligand>
</feature>
<feature type="site" description="Interaction with substrate tRNA" evidence="1">
    <location>
        <position position="100"/>
    </location>
</feature>
<feature type="site" description="Interaction with substrate tRNA" evidence="1">
    <location>
        <position position="122"/>
    </location>
</feature>
<gene>
    <name evidence="1" type="primary">miaA</name>
    <name type="ordered locus">HNE_0452</name>
</gene>
<accession>Q0C511</accession>
<name>MIAA_HYPNA</name>
<proteinExistence type="inferred from homology"/>
<keyword id="KW-0067">ATP-binding</keyword>
<keyword id="KW-0460">Magnesium</keyword>
<keyword id="KW-0547">Nucleotide-binding</keyword>
<keyword id="KW-1185">Reference proteome</keyword>
<keyword id="KW-0808">Transferase</keyword>
<keyword id="KW-0819">tRNA processing</keyword>
<dbReference type="EC" id="2.5.1.75" evidence="1"/>
<dbReference type="EMBL" id="CP000158">
    <property type="protein sequence ID" value="ABI76679.1"/>
    <property type="molecule type" value="Genomic_DNA"/>
</dbReference>
<dbReference type="RefSeq" id="WP_011645482.1">
    <property type="nucleotide sequence ID" value="NC_008358.1"/>
</dbReference>
<dbReference type="SMR" id="Q0C511"/>
<dbReference type="STRING" id="228405.HNE_0452"/>
<dbReference type="KEGG" id="hne:HNE_0452"/>
<dbReference type="eggNOG" id="COG0324">
    <property type="taxonomic scope" value="Bacteria"/>
</dbReference>
<dbReference type="HOGENOM" id="CLU_032616_0_1_5"/>
<dbReference type="Proteomes" id="UP000001959">
    <property type="component" value="Chromosome"/>
</dbReference>
<dbReference type="GO" id="GO:0005524">
    <property type="term" value="F:ATP binding"/>
    <property type="evidence" value="ECO:0007669"/>
    <property type="project" value="UniProtKB-UniRule"/>
</dbReference>
<dbReference type="GO" id="GO:0052381">
    <property type="term" value="F:tRNA dimethylallyltransferase activity"/>
    <property type="evidence" value="ECO:0007669"/>
    <property type="project" value="UniProtKB-UniRule"/>
</dbReference>
<dbReference type="GO" id="GO:0006400">
    <property type="term" value="P:tRNA modification"/>
    <property type="evidence" value="ECO:0007669"/>
    <property type="project" value="TreeGrafter"/>
</dbReference>
<dbReference type="Gene3D" id="1.10.20.140">
    <property type="match status" value="1"/>
</dbReference>
<dbReference type="Gene3D" id="3.40.50.300">
    <property type="entry name" value="P-loop containing nucleotide triphosphate hydrolases"/>
    <property type="match status" value="1"/>
</dbReference>
<dbReference type="HAMAP" id="MF_00185">
    <property type="entry name" value="IPP_trans"/>
    <property type="match status" value="1"/>
</dbReference>
<dbReference type="InterPro" id="IPR039657">
    <property type="entry name" value="Dimethylallyltransferase"/>
</dbReference>
<dbReference type="InterPro" id="IPR018022">
    <property type="entry name" value="IPT"/>
</dbReference>
<dbReference type="InterPro" id="IPR027417">
    <property type="entry name" value="P-loop_NTPase"/>
</dbReference>
<dbReference type="NCBIfam" id="TIGR00174">
    <property type="entry name" value="miaA"/>
    <property type="match status" value="1"/>
</dbReference>
<dbReference type="PANTHER" id="PTHR11088">
    <property type="entry name" value="TRNA DIMETHYLALLYLTRANSFERASE"/>
    <property type="match status" value="1"/>
</dbReference>
<dbReference type="PANTHER" id="PTHR11088:SF60">
    <property type="entry name" value="TRNA DIMETHYLALLYLTRANSFERASE"/>
    <property type="match status" value="1"/>
</dbReference>
<dbReference type="Pfam" id="PF01715">
    <property type="entry name" value="IPPT"/>
    <property type="match status" value="1"/>
</dbReference>
<dbReference type="SUPFAM" id="SSF52540">
    <property type="entry name" value="P-loop containing nucleoside triphosphate hydrolases"/>
    <property type="match status" value="1"/>
</dbReference>
<sequence>MHPAILIHGPTASGKSALAIELARKLGGEVINADSMQVYSDLQVISARPTEEEMAGVPHHLFGYVDAGRRYSTGEWLESARSVLKRLQRQNKHAVIVGGTGLYLLALTQGLSDIPPVPEDIRAEVKAISESEGADGLRLRLAPHDPELAERLGTGDRQRLARAYEVWLATGRQLSEFQNERQPPVLKEGEWVGFALTPPRAALYKKIDRRFEGMLMQGAVAEARALVSRNLDPELPAMKALGMPSIAAFVRGEISAEEAAESAKRESRRYAKRQFTWIGRQFPFWPRIPSPEVSDRMRVIFALYREIDTADTEDYA</sequence>
<evidence type="ECO:0000255" key="1">
    <source>
        <dbReference type="HAMAP-Rule" id="MF_00185"/>
    </source>
</evidence>
<comment type="function">
    <text evidence="1">Catalyzes the transfer of a dimethylallyl group onto the adenine at position 37 in tRNAs that read codons beginning with uridine, leading to the formation of N6-(dimethylallyl)adenosine (i(6)A).</text>
</comment>
<comment type="catalytic activity">
    <reaction evidence="1">
        <text>adenosine(37) in tRNA + dimethylallyl diphosphate = N(6)-dimethylallyladenosine(37) in tRNA + diphosphate</text>
        <dbReference type="Rhea" id="RHEA:26482"/>
        <dbReference type="Rhea" id="RHEA-COMP:10162"/>
        <dbReference type="Rhea" id="RHEA-COMP:10375"/>
        <dbReference type="ChEBI" id="CHEBI:33019"/>
        <dbReference type="ChEBI" id="CHEBI:57623"/>
        <dbReference type="ChEBI" id="CHEBI:74411"/>
        <dbReference type="ChEBI" id="CHEBI:74415"/>
        <dbReference type="EC" id="2.5.1.75"/>
    </reaction>
</comment>
<comment type="cofactor">
    <cofactor evidence="1">
        <name>Mg(2+)</name>
        <dbReference type="ChEBI" id="CHEBI:18420"/>
    </cofactor>
</comment>
<comment type="subunit">
    <text evidence="1">Monomer.</text>
</comment>
<comment type="similarity">
    <text evidence="1">Belongs to the IPP transferase family.</text>
</comment>
<protein>
    <recommendedName>
        <fullName evidence="1">tRNA dimethylallyltransferase</fullName>
        <ecNumber evidence="1">2.5.1.75</ecNumber>
    </recommendedName>
    <alternativeName>
        <fullName evidence="1">Dimethylallyl diphosphate:tRNA dimethylallyltransferase</fullName>
        <shortName evidence="1">DMAPP:tRNA dimethylallyltransferase</shortName>
        <shortName evidence="1">DMATase</shortName>
    </alternativeName>
    <alternativeName>
        <fullName evidence="1">Isopentenyl-diphosphate:tRNA isopentenyltransferase</fullName>
        <shortName evidence="1">IPP transferase</shortName>
        <shortName evidence="1">IPPT</shortName>
        <shortName evidence="1">IPTase</shortName>
    </alternativeName>
</protein>